<comment type="subcellular location">
    <subcellularLocation>
        <location evidence="2">Membrane</location>
        <topology evidence="2">Multi-pass membrane protein</topology>
    </subcellularLocation>
</comment>
<comment type="similarity">
    <text evidence="2">Belongs to the TMEM185 family.</text>
</comment>
<sequence length="350" mass="40659">MNPRGLFQDFNPSKFLIYACLLLFSVLLPLRLDGVIQWSYWAVFAPIWLWKLLVLAGASVGAGVWARNPRYRTEGEACVEFKAMLIAVGIHLLLLMFEVLVCDRVERGTHFWLLVFMPLFFVSPVSVAACVWGFRHDRSLELEILCSVNILQFIFIALRLDRIIHWPWLVVFVPLWILMSFLCLVVLYYIVWSLLFLRSLDVVAEQRRTHVTMAICWITIVVPLLIFEVLLVHRLDGHNMFSYISIFVPLWLSLITLMATTFRRKGGNHWWFGIRRDFCQFLLEIFPFLREYGNISYDLHHEDSEDAEETSAPEAPKIAPMFGKKARVVITQSPGKYVPPPPKLNIDMPD</sequence>
<feature type="chain" id="PRO_0000278795" description="Transmembrane protein 185B">
    <location>
        <begin position="1"/>
        <end position="350"/>
    </location>
</feature>
<feature type="transmembrane region" description="Helical" evidence="1">
    <location>
        <begin position="16"/>
        <end position="36"/>
    </location>
</feature>
<feature type="transmembrane region" description="Helical" evidence="1">
    <location>
        <begin position="41"/>
        <end position="61"/>
    </location>
</feature>
<feature type="transmembrane region" description="Helical" evidence="1">
    <location>
        <begin position="81"/>
        <end position="101"/>
    </location>
</feature>
<feature type="transmembrane region" description="Helical" evidence="1">
    <location>
        <begin position="111"/>
        <end position="131"/>
    </location>
</feature>
<feature type="transmembrane region" description="Helical" evidence="1">
    <location>
        <begin position="168"/>
        <end position="188"/>
    </location>
</feature>
<feature type="transmembrane region" description="Helical" evidence="1">
    <location>
        <begin position="211"/>
        <end position="231"/>
    </location>
</feature>
<feature type="transmembrane region" description="Helical" evidence="1">
    <location>
        <begin position="240"/>
        <end position="260"/>
    </location>
</feature>
<name>T185B_BOVIN</name>
<proteinExistence type="evidence at transcript level"/>
<evidence type="ECO:0000255" key="1"/>
<evidence type="ECO:0000305" key="2"/>
<dbReference type="EMBL" id="BC123796">
    <property type="protein sequence ID" value="AAI23797.1"/>
    <property type="molecule type" value="mRNA"/>
</dbReference>
<dbReference type="RefSeq" id="NP_001071436.1">
    <property type="nucleotide sequence ID" value="NM_001077968.1"/>
</dbReference>
<dbReference type="FunCoup" id="Q08DE2">
    <property type="interactions" value="1846"/>
</dbReference>
<dbReference type="STRING" id="9913.ENSBTAP00000050866"/>
<dbReference type="PaxDb" id="9913-ENSBTAP00000050866"/>
<dbReference type="Ensembl" id="ENSBTAT00000038352.4">
    <property type="protein sequence ID" value="ENSBTAP00000050866.1"/>
    <property type="gene ID" value="ENSBTAG00000026829.4"/>
</dbReference>
<dbReference type="Ensembl" id="ENSBTAT00000128949.1">
    <property type="protein sequence ID" value="ENSBTAP00000087878.1"/>
    <property type="gene ID" value="ENSBTAG00000026829.4"/>
</dbReference>
<dbReference type="GeneID" id="526189"/>
<dbReference type="KEGG" id="bta:526189"/>
<dbReference type="CTD" id="79134"/>
<dbReference type="VEuPathDB" id="HostDB:ENSBTAG00000026829"/>
<dbReference type="VGNC" id="VGNC:36012">
    <property type="gene designation" value="TMEM185B"/>
</dbReference>
<dbReference type="eggNOG" id="KOG3879">
    <property type="taxonomic scope" value="Eukaryota"/>
</dbReference>
<dbReference type="GeneTree" id="ENSGT00940000163000"/>
<dbReference type="HOGENOM" id="CLU_053027_0_0_1"/>
<dbReference type="InParanoid" id="Q08DE2"/>
<dbReference type="OMA" id="PFEFEFF"/>
<dbReference type="OrthoDB" id="72976at2759"/>
<dbReference type="TreeFam" id="TF313829"/>
<dbReference type="Proteomes" id="UP000009136">
    <property type="component" value="Chromosome 2"/>
</dbReference>
<dbReference type="Bgee" id="ENSBTAG00000026829">
    <property type="expression patterns" value="Expressed in oocyte and 105 other cell types or tissues"/>
</dbReference>
<dbReference type="GO" id="GO:0016020">
    <property type="term" value="C:membrane"/>
    <property type="evidence" value="ECO:0007669"/>
    <property type="project" value="UniProtKB-SubCell"/>
</dbReference>
<dbReference type="InterPro" id="IPR019396">
    <property type="entry name" value="TM_Fragile-X-F-assoc"/>
</dbReference>
<dbReference type="PANTHER" id="PTHR13568">
    <property type="entry name" value="FAM11A, B PROTEIN"/>
    <property type="match status" value="1"/>
</dbReference>
<dbReference type="PANTHER" id="PTHR13568:SF5">
    <property type="entry name" value="TRANSMEMBRANE PROTEIN 185B"/>
    <property type="match status" value="1"/>
</dbReference>
<dbReference type="Pfam" id="PF10269">
    <property type="entry name" value="Tmemb_185A"/>
    <property type="match status" value="1"/>
</dbReference>
<accession>Q08DE2</accession>
<keyword id="KW-0472">Membrane</keyword>
<keyword id="KW-1185">Reference proteome</keyword>
<keyword id="KW-0812">Transmembrane</keyword>
<keyword id="KW-1133">Transmembrane helix</keyword>
<gene>
    <name type="primary">TMEM185B</name>
    <name type="synonym">FAM11B</name>
</gene>
<organism>
    <name type="scientific">Bos taurus</name>
    <name type="common">Bovine</name>
    <dbReference type="NCBI Taxonomy" id="9913"/>
    <lineage>
        <taxon>Eukaryota</taxon>
        <taxon>Metazoa</taxon>
        <taxon>Chordata</taxon>
        <taxon>Craniata</taxon>
        <taxon>Vertebrata</taxon>
        <taxon>Euteleostomi</taxon>
        <taxon>Mammalia</taxon>
        <taxon>Eutheria</taxon>
        <taxon>Laurasiatheria</taxon>
        <taxon>Artiodactyla</taxon>
        <taxon>Ruminantia</taxon>
        <taxon>Pecora</taxon>
        <taxon>Bovidae</taxon>
        <taxon>Bovinae</taxon>
        <taxon>Bos</taxon>
    </lineage>
</organism>
<protein>
    <recommendedName>
        <fullName>Transmembrane protein 185B</fullName>
    </recommendedName>
    <alternativeName>
        <fullName>Protein FAM11B</fullName>
    </alternativeName>
</protein>
<reference key="1">
    <citation type="submission" date="2006-09" db="EMBL/GenBank/DDBJ databases">
        <authorList>
            <consortium name="NIH - Mammalian Gene Collection (MGC) project"/>
        </authorList>
    </citation>
    <scope>NUCLEOTIDE SEQUENCE [LARGE SCALE MRNA]</scope>
    <source>
        <strain>Hereford</strain>
        <tissue>Brain cortex</tissue>
    </source>
</reference>